<evidence type="ECO:0000255" key="1">
    <source>
        <dbReference type="PROSITE-ProRule" id="PRU00108"/>
    </source>
</evidence>
<evidence type="ECO:0000256" key="2">
    <source>
        <dbReference type="SAM" id="MobiDB-lite"/>
    </source>
</evidence>
<evidence type="ECO:0000269" key="3">
    <source>
    </source>
</evidence>
<evidence type="ECO:0000269" key="4">
    <source>
    </source>
</evidence>
<evidence type="ECO:0000269" key="5">
    <source>
    </source>
</evidence>
<evidence type="ECO:0000269" key="6">
    <source>
    </source>
</evidence>
<evidence type="ECO:0000305" key="7"/>
<evidence type="ECO:0007744" key="8">
    <source>
    </source>
</evidence>
<comment type="subcellular location">
    <subcellularLocation>
        <location evidence="7">Nucleus</location>
    </subcellularLocation>
</comment>
<comment type="tissue specificity">
    <text evidence="5">Expressed in specific and overlapping patterns with Irx1 and Irx2 in the developing and adult metanephric kidney. In the adult metanephros, renal expression is found in the loop of Henle in the S3 proximal tubule segment and in the thick ascending limb (TAL) of the distal tubule.</text>
</comment>
<comment type="developmental stage">
    <text evidence="3 4 6">First detected in the mesoderm at stage 7.5 dpc. During neurogenesis (9.5 dpc to 10.5 dpc), predominantly expressed along the anteroposterior axis of the CNS in the mesencephalon, metencephalon, rhombencephalon and spinal cord, with expression excluded from the midbrain-hindbrain junction. Beginning at 9.5 dpc, expression is found in the epithelial component of the branchial arches and foregut. At later stages, expressed in somites. At 10.5 dpc, expressed in the cephalic mesenchyme surrounding the optic vesicle. By 12.5 dpc, expression remains in the mesenchyme and also begins in the neuroretina, and at 16.5 dpc expression is exclusively located in the inner neuroblast layers of the neuroretina. Starting at the otic vesicle stage, shows regionalized expression in the developing inner ear with expression in the entire otic vesicle from 10.5 dpc onwards. Expressed in distinct patterns in the developing limb buds from 10.5 dpc onwards. Expressed in the developing heart in the ventricular septum from the onset of its formation (10.5 dpc) onward. In fetal stages, expression becomes confined to the myocardium of the atrioventricular bundle and bundle branches of the forming ventricular conduction system.</text>
</comment>
<comment type="similarity">
    <text evidence="7">Belongs to the TALE/IRO homeobox family.</text>
</comment>
<organism>
    <name type="scientific">Mus musculus</name>
    <name type="common">Mouse</name>
    <dbReference type="NCBI Taxonomy" id="10090"/>
    <lineage>
        <taxon>Eukaryota</taxon>
        <taxon>Metazoa</taxon>
        <taxon>Chordata</taxon>
        <taxon>Craniata</taxon>
        <taxon>Vertebrata</taxon>
        <taxon>Euteleostomi</taxon>
        <taxon>Mammalia</taxon>
        <taxon>Eutheria</taxon>
        <taxon>Euarchontoglires</taxon>
        <taxon>Glires</taxon>
        <taxon>Rodentia</taxon>
        <taxon>Myomorpha</taxon>
        <taxon>Muroidea</taxon>
        <taxon>Muridae</taxon>
        <taxon>Murinae</taxon>
        <taxon>Mus</taxon>
        <taxon>Mus</taxon>
    </lineage>
</organism>
<protein>
    <recommendedName>
        <fullName>Iroquois-class homeodomain protein IRX-1</fullName>
    </recommendedName>
    <alternativeName>
        <fullName>Homeodomain protein IRXA1</fullName>
    </alternativeName>
    <alternativeName>
        <fullName>Iroquois homeobox protein 1</fullName>
    </alternativeName>
</protein>
<sequence>MSFPQLGYPQYLSAAGPGAYGGERPGVLAAAAAAAAAASSGRPGTAELGAGAGAAAVTSVLGMYAAAGPYAGAPNYSAFLPYAADLSLFSQMGSQYELKDNPGVHPATFAAHTTPAYYPYGQFQYGDPGRPKNATRESTSTLKAWLNEHRKNPYPTKGEKIMLAIITKMTLTQVSTWFANARRRLKKENKVTWGARSKDQEDGALFGSDTEGDPEKAEDDEEIDLESIDIDQIDERDGDQSNEDEEDKAEAPRARVAPPASARDQSSPLSAAETLKSQDSPLGLVKEVSEPGSTRLLSPGAAAVGLQGAPHSKPKIWSLAETATSPDGAPKASPPPPSSHASAHGPPSGSPLQHPAFLPSHGLYTCHIGKFSNWTNGAFLAQGSLLNMRSFLGVSAPHAAPHGPHLTAPPPPQPPVQVATGVLHGEKASARSSPALPERDLVTRPDSPPQQLKSPFQPVRDNSLAPQEGTPRILAALPSA</sequence>
<reference key="1">
    <citation type="journal article" date="2000" name="Dev. Biol.">
        <title>Patterning the embryonic heart: identification of five mouse Iroquois homeobox genes in the developing heart.</title>
        <authorList>
            <person name="Christoffels V.M."/>
            <person name="Keijser A.G.M."/>
            <person name="Houweling A.C."/>
            <person name="Clout D.E.W."/>
            <person name="Moorman A.F.M."/>
        </authorList>
    </citation>
    <scope>NUCLEOTIDE SEQUENCE [MRNA]</scope>
    <scope>DEVELOPMENTAL STAGE</scope>
    <source>
        <strain>FVB/N</strain>
        <tissue>Embryonic heart</tissue>
    </source>
</reference>
<reference key="2">
    <citation type="journal article" date="2000" name="Mech. Dev.">
        <title>Expression of two novel mouse Iroquois-class homeobox genes during neurogenesis.</title>
        <authorList>
            <person name="Cohen D.R."/>
            <person name="Cheng C.W."/>
            <person name="Cheng S.H."/>
            <person name="Hui C.-C."/>
        </authorList>
    </citation>
    <scope>NUCLEOTIDE SEQUENCE [MRNA]</scope>
    <scope>DEVELOPMENTAL STAGE</scope>
    <source>
        <tissue>Brain</tissue>
    </source>
</reference>
<reference key="3">
    <citation type="journal article" date="2005" name="Science">
        <title>The transcriptional landscape of the mammalian genome.</title>
        <authorList>
            <person name="Carninci P."/>
            <person name="Kasukawa T."/>
            <person name="Katayama S."/>
            <person name="Gough J."/>
            <person name="Frith M.C."/>
            <person name="Maeda N."/>
            <person name="Oyama R."/>
            <person name="Ravasi T."/>
            <person name="Lenhard B."/>
            <person name="Wells C."/>
            <person name="Kodzius R."/>
            <person name="Shimokawa K."/>
            <person name="Bajic V.B."/>
            <person name="Brenner S.E."/>
            <person name="Batalov S."/>
            <person name="Forrest A.R."/>
            <person name="Zavolan M."/>
            <person name="Davis M.J."/>
            <person name="Wilming L.G."/>
            <person name="Aidinis V."/>
            <person name="Allen J.E."/>
            <person name="Ambesi-Impiombato A."/>
            <person name="Apweiler R."/>
            <person name="Aturaliya R.N."/>
            <person name="Bailey T.L."/>
            <person name="Bansal M."/>
            <person name="Baxter L."/>
            <person name="Beisel K.W."/>
            <person name="Bersano T."/>
            <person name="Bono H."/>
            <person name="Chalk A.M."/>
            <person name="Chiu K.P."/>
            <person name="Choudhary V."/>
            <person name="Christoffels A."/>
            <person name="Clutterbuck D.R."/>
            <person name="Crowe M.L."/>
            <person name="Dalla E."/>
            <person name="Dalrymple B.P."/>
            <person name="de Bono B."/>
            <person name="Della Gatta G."/>
            <person name="di Bernardo D."/>
            <person name="Down T."/>
            <person name="Engstrom P."/>
            <person name="Fagiolini M."/>
            <person name="Faulkner G."/>
            <person name="Fletcher C.F."/>
            <person name="Fukushima T."/>
            <person name="Furuno M."/>
            <person name="Futaki S."/>
            <person name="Gariboldi M."/>
            <person name="Georgii-Hemming P."/>
            <person name="Gingeras T.R."/>
            <person name="Gojobori T."/>
            <person name="Green R.E."/>
            <person name="Gustincich S."/>
            <person name="Harbers M."/>
            <person name="Hayashi Y."/>
            <person name="Hensch T.K."/>
            <person name="Hirokawa N."/>
            <person name="Hill D."/>
            <person name="Huminiecki L."/>
            <person name="Iacono M."/>
            <person name="Ikeo K."/>
            <person name="Iwama A."/>
            <person name="Ishikawa T."/>
            <person name="Jakt M."/>
            <person name="Kanapin A."/>
            <person name="Katoh M."/>
            <person name="Kawasawa Y."/>
            <person name="Kelso J."/>
            <person name="Kitamura H."/>
            <person name="Kitano H."/>
            <person name="Kollias G."/>
            <person name="Krishnan S.P."/>
            <person name="Kruger A."/>
            <person name="Kummerfeld S.K."/>
            <person name="Kurochkin I.V."/>
            <person name="Lareau L.F."/>
            <person name="Lazarevic D."/>
            <person name="Lipovich L."/>
            <person name="Liu J."/>
            <person name="Liuni S."/>
            <person name="McWilliam S."/>
            <person name="Madan Babu M."/>
            <person name="Madera M."/>
            <person name="Marchionni L."/>
            <person name="Matsuda H."/>
            <person name="Matsuzawa S."/>
            <person name="Miki H."/>
            <person name="Mignone F."/>
            <person name="Miyake S."/>
            <person name="Morris K."/>
            <person name="Mottagui-Tabar S."/>
            <person name="Mulder N."/>
            <person name="Nakano N."/>
            <person name="Nakauchi H."/>
            <person name="Ng P."/>
            <person name="Nilsson R."/>
            <person name="Nishiguchi S."/>
            <person name="Nishikawa S."/>
            <person name="Nori F."/>
            <person name="Ohara O."/>
            <person name="Okazaki Y."/>
            <person name="Orlando V."/>
            <person name="Pang K.C."/>
            <person name="Pavan W.J."/>
            <person name="Pavesi G."/>
            <person name="Pesole G."/>
            <person name="Petrovsky N."/>
            <person name="Piazza S."/>
            <person name="Reed J."/>
            <person name="Reid J.F."/>
            <person name="Ring B.Z."/>
            <person name="Ringwald M."/>
            <person name="Rost B."/>
            <person name="Ruan Y."/>
            <person name="Salzberg S.L."/>
            <person name="Sandelin A."/>
            <person name="Schneider C."/>
            <person name="Schoenbach C."/>
            <person name="Sekiguchi K."/>
            <person name="Semple C.A."/>
            <person name="Seno S."/>
            <person name="Sessa L."/>
            <person name="Sheng Y."/>
            <person name="Shibata Y."/>
            <person name="Shimada H."/>
            <person name="Shimada K."/>
            <person name="Silva D."/>
            <person name="Sinclair B."/>
            <person name="Sperling S."/>
            <person name="Stupka E."/>
            <person name="Sugiura K."/>
            <person name="Sultana R."/>
            <person name="Takenaka Y."/>
            <person name="Taki K."/>
            <person name="Tammoja K."/>
            <person name="Tan S.L."/>
            <person name="Tang S."/>
            <person name="Taylor M.S."/>
            <person name="Tegner J."/>
            <person name="Teichmann S.A."/>
            <person name="Ueda H.R."/>
            <person name="van Nimwegen E."/>
            <person name="Verardo R."/>
            <person name="Wei C.L."/>
            <person name="Yagi K."/>
            <person name="Yamanishi H."/>
            <person name="Zabarovsky E."/>
            <person name="Zhu S."/>
            <person name="Zimmer A."/>
            <person name="Hide W."/>
            <person name="Bult C."/>
            <person name="Grimmond S.M."/>
            <person name="Teasdale R.D."/>
            <person name="Liu E.T."/>
            <person name="Brusic V."/>
            <person name="Quackenbush J."/>
            <person name="Wahlestedt C."/>
            <person name="Mattick J.S."/>
            <person name="Hume D.A."/>
            <person name="Kai C."/>
            <person name="Sasaki D."/>
            <person name="Tomaru Y."/>
            <person name="Fukuda S."/>
            <person name="Kanamori-Katayama M."/>
            <person name="Suzuki M."/>
            <person name="Aoki J."/>
            <person name="Arakawa T."/>
            <person name="Iida J."/>
            <person name="Imamura K."/>
            <person name="Itoh M."/>
            <person name="Kato T."/>
            <person name="Kawaji H."/>
            <person name="Kawagashira N."/>
            <person name="Kawashima T."/>
            <person name="Kojima M."/>
            <person name="Kondo S."/>
            <person name="Konno H."/>
            <person name="Nakano K."/>
            <person name="Ninomiya N."/>
            <person name="Nishio T."/>
            <person name="Okada M."/>
            <person name="Plessy C."/>
            <person name="Shibata K."/>
            <person name="Shiraki T."/>
            <person name="Suzuki S."/>
            <person name="Tagami M."/>
            <person name="Waki K."/>
            <person name="Watahiki A."/>
            <person name="Okamura-Oho Y."/>
            <person name="Suzuki H."/>
            <person name="Kawai J."/>
            <person name="Hayashizaki Y."/>
        </authorList>
    </citation>
    <scope>NUCLEOTIDE SEQUENCE [LARGE SCALE MRNA]</scope>
    <source>
        <strain>C57BL/6J</strain>
        <tissue>Embryo</tissue>
    </source>
</reference>
<reference key="4">
    <citation type="journal article" date="2009" name="PLoS Biol.">
        <title>Lineage-specific biology revealed by a finished genome assembly of the mouse.</title>
        <authorList>
            <person name="Church D.M."/>
            <person name="Goodstadt L."/>
            <person name="Hillier L.W."/>
            <person name="Zody M.C."/>
            <person name="Goldstein S."/>
            <person name="She X."/>
            <person name="Bult C.J."/>
            <person name="Agarwala R."/>
            <person name="Cherry J.L."/>
            <person name="DiCuccio M."/>
            <person name="Hlavina W."/>
            <person name="Kapustin Y."/>
            <person name="Meric P."/>
            <person name="Maglott D."/>
            <person name="Birtle Z."/>
            <person name="Marques A.C."/>
            <person name="Graves T."/>
            <person name="Zhou S."/>
            <person name="Teague B."/>
            <person name="Potamousis K."/>
            <person name="Churas C."/>
            <person name="Place M."/>
            <person name="Herschleb J."/>
            <person name="Runnheim R."/>
            <person name="Forrest D."/>
            <person name="Amos-Landgraf J."/>
            <person name="Schwartz D.C."/>
            <person name="Cheng Z."/>
            <person name="Lindblad-Toh K."/>
            <person name="Eichler E.E."/>
            <person name="Ponting C.P."/>
        </authorList>
    </citation>
    <scope>NUCLEOTIDE SEQUENCE [LARGE SCALE GENOMIC DNA]</scope>
    <source>
        <strain>C57BL/6J</strain>
    </source>
</reference>
<reference key="5">
    <citation type="submission" date="2005-07" db="EMBL/GenBank/DDBJ databases">
        <authorList>
            <person name="Mural R.J."/>
            <person name="Adams M.D."/>
            <person name="Myers E.W."/>
            <person name="Smith H.O."/>
            <person name="Venter J.C."/>
        </authorList>
    </citation>
    <scope>NUCLEOTIDE SEQUENCE [LARGE SCALE GENOMIC DNA]</scope>
</reference>
<reference key="6">
    <citation type="journal article" date="1997" name="Mech. Dev.">
        <title>Identification of the vertebrate Iroquois homeobox gene family with overlapping expression during early development of the nervous system.</title>
        <authorList>
            <person name="Bosse A."/>
            <person name="Zulch A."/>
            <person name="Becker M.B."/>
            <person name="Torres M."/>
            <person name="Gomez-Skarmeta J.-L."/>
            <person name="Modolell J."/>
            <person name="Gruss P."/>
        </authorList>
    </citation>
    <scope>NUCLEOTIDE SEQUENCE [MRNA] OF 125-198</scope>
    <scope>DEVELOPMENTAL STAGE</scope>
</reference>
<reference key="7">
    <citation type="journal article" date="2007" name="Genes Dev.">
        <title>The prepattern transcription factor Irx3 directs nephron segment identity.</title>
        <authorList>
            <person name="Reggiani L."/>
            <person name="Raciti D."/>
            <person name="Airik R."/>
            <person name="Kispert A."/>
            <person name="Braendli A.W."/>
        </authorList>
    </citation>
    <scope>TISSUE SPECIFICITY</scope>
</reference>
<reference key="8">
    <citation type="journal article" date="2010" name="Cell">
        <title>A tissue-specific atlas of mouse protein phosphorylation and expression.</title>
        <authorList>
            <person name="Huttlin E.L."/>
            <person name="Jedrychowski M.P."/>
            <person name="Elias J.E."/>
            <person name="Goswami T."/>
            <person name="Rad R."/>
            <person name="Beausoleil S.A."/>
            <person name="Villen J."/>
            <person name="Haas W."/>
            <person name="Sowa M.E."/>
            <person name="Gygi S.P."/>
        </authorList>
    </citation>
    <scope>PHOSPHORYLATION [LARGE SCALE ANALYSIS] AT SER-241</scope>
    <scope>IDENTIFICATION BY MASS SPECTROMETRY [LARGE SCALE ANALYSIS]</scope>
    <source>
        <tissue>Kidney</tissue>
        <tissue>Lung</tissue>
    </source>
</reference>
<name>IRX1_MOUSE</name>
<gene>
    <name type="primary">Irx1</name>
    <name type="synonym">Irxa1</name>
</gene>
<proteinExistence type="evidence at protein level"/>
<feature type="chain" id="PRO_0000049152" description="Iroquois-class homeodomain protein IRX-1">
    <location>
        <begin position="1"/>
        <end position="480"/>
    </location>
</feature>
<feature type="DNA-binding region" description="Homeobox; TALE-type" evidence="1">
    <location>
        <begin position="127"/>
        <end position="189"/>
    </location>
</feature>
<feature type="region of interest" description="Disordered" evidence="2">
    <location>
        <begin position="190"/>
        <end position="285"/>
    </location>
</feature>
<feature type="region of interest" description="Disordered" evidence="2">
    <location>
        <begin position="318"/>
        <end position="354"/>
    </location>
</feature>
<feature type="region of interest" description="Disordered" evidence="2">
    <location>
        <begin position="401"/>
        <end position="480"/>
    </location>
</feature>
<feature type="compositionally biased region" description="Acidic residues" evidence="2">
    <location>
        <begin position="210"/>
        <end position="232"/>
    </location>
</feature>
<feature type="compositionally biased region" description="Low complexity" evidence="2">
    <location>
        <begin position="254"/>
        <end position="263"/>
    </location>
</feature>
<feature type="compositionally biased region" description="Polar residues" evidence="2">
    <location>
        <begin position="264"/>
        <end position="280"/>
    </location>
</feature>
<feature type="compositionally biased region" description="Low complexity" evidence="2">
    <location>
        <begin position="339"/>
        <end position="351"/>
    </location>
</feature>
<feature type="modified residue" description="Phosphoserine" evidence="8">
    <location>
        <position position="241"/>
    </location>
</feature>
<feature type="sequence conflict" description="In Ref. 3; BAE21938." evidence="7" ref="3">
    <original>A</original>
    <variation>G</variation>
    <location>
        <position position="73"/>
    </location>
</feature>
<feature type="sequence conflict" description="In Ref. 1; AAF63954." evidence="7" ref="1">
    <original>S</original>
    <variation>T</variation>
    <location>
        <position position="197"/>
    </location>
</feature>
<feature type="sequence conflict" description="In Ref. 1; AAF63954." evidence="7" ref="1">
    <original>A</original>
    <variation>R</variation>
    <location>
        <position position="257"/>
    </location>
</feature>
<dbReference type="EMBL" id="AF165984">
    <property type="protein sequence ID" value="AAF63954.1"/>
    <property type="molecule type" value="mRNA"/>
</dbReference>
<dbReference type="EMBL" id="AK133937">
    <property type="protein sequence ID" value="BAE21938.1"/>
    <property type="molecule type" value="mRNA"/>
</dbReference>
<dbReference type="EMBL" id="CT009684">
    <property type="status" value="NOT_ANNOTATED_CDS"/>
    <property type="molecule type" value="Genomic_DNA"/>
</dbReference>
<dbReference type="EMBL" id="CH466563">
    <property type="protein sequence ID" value="EDL37041.1"/>
    <property type="molecule type" value="Genomic_DNA"/>
</dbReference>
<dbReference type="EMBL" id="Y15002">
    <property type="protein sequence ID" value="CAA75234.1"/>
    <property type="molecule type" value="mRNA"/>
</dbReference>
<dbReference type="CCDS" id="CCDS26627.1"/>
<dbReference type="RefSeq" id="NP_034703.2">
    <property type="nucleotide sequence ID" value="NM_010573.2"/>
</dbReference>
<dbReference type="SMR" id="P81068"/>
<dbReference type="BioGRID" id="200792">
    <property type="interactions" value="2"/>
</dbReference>
<dbReference type="FunCoup" id="P81068">
    <property type="interactions" value="895"/>
</dbReference>
<dbReference type="STRING" id="10090.ENSMUSP00000076562"/>
<dbReference type="iPTMnet" id="P81068"/>
<dbReference type="PhosphoSitePlus" id="P81068"/>
<dbReference type="PaxDb" id="10090-ENSMUSP00000076562"/>
<dbReference type="PeptideAtlas" id="P81068"/>
<dbReference type="ProteomicsDB" id="301670"/>
<dbReference type="Antibodypedia" id="9131">
    <property type="antibodies" value="169 antibodies from 31 providers"/>
</dbReference>
<dbReference type="DNASU" id="16371"/>
<dbReference type="Ensembl" id="ENSMUST00000077337.9">
    <property type="protein sequence ID" value="ENSMUSP00000076562.9"/>
    <property type="gene ID" value="ENSMUSG00000060969.10"/>
</dbReference>
<dbReference type="GeneID" id="16371"/>
<dbReference type="KEGG" id="mmu:16371"/>
<dbReference type="UCSC" id="uc007rdd.1">
    <property type="organism name" value="mouse"/>
</dbReference>
<dbReference type="AGR" id="MGI:1197515"/>
<dbReference type="CTD" id="79192"/>
<dbReference type="MGI" id="MGI:1197515">
    <property type="gene designation" value="Irx1"/>
</dbReference>
<dbReference type="VEuPathDB" id="HostDB:ENSMUSG00000060969"/>
<dbReference type="eggNOG" id="KOG0773">
    <property type="taxonomic scope" value="Eukaryota"/>
</dbReference>
<dbReference type="GeneTree" id="ENSGT00940000160429"/>
<dbReference type="HOGENOM" id="CLU_042927_0_0_1"/>
<dbReference type="InParanoid" id="P81068"/>
<dbReference type="OMA" id="QVNHTST"/>
<dbReference type="OrthoDB" id="5399138at2759"/>
<dbReference type="PhylomeDB" id="P81068"/>
<dbReference type="TreeFam" id="TF319371"/>
<dbReference type="BioGRID-ORCS" id="16371">
    <property type="hits" value="4 hits in 78 CRISPR screens"/>
</dbReference>
<dbReference type="ChiTaRS" id="Irx1">
    <property type="organism name" value="mouse"/>
</dbReference>
<dbReference type="PRO" id="PR:P81068"/>
<dbReference type="Proteomes" id="UP000000589">
    <property type="component" value="Chromosome 13"/>
</dbReference>
<dbReference type="RNAct" id="P81068">
    <property type="molecule type" value="protein"/>
</dbReference>
<dbReference type="Bgee" id="ENSMUSG00000060969">
    <property type="expression patterns" value="Expressed in cerebellum ventricular layer and 222 other cell types or tissues"/>
</dbReference>
<dbReference type="ExpressionAtlas" id="P81068">
    <property type="expression patterns" value="baseline and differential"/>
</dbReference>
<dbReference type="GO" id="GO:0005654">
    <property type="term" value="C:nucleoplasm"/>
    <property type="evidence" value="ECO:0000304"/>
    <property type="project" value="Reactome"/>
</dbReference>
<dbReference type="GO" id="GO:0001227">
    <property type="term" value="F:DNA-binding transcription repressor activity, RNA polymerase II-specific"/>
    <property type="evidence" value="ECO:0007669"/>
    <property type="project" value="Ensembl"/>
</dbReference>
<dbReference type="GO" id="GO:1990837">
    <property type="term" value="F:sequence-specific double-stranded DNA binding"/>
    <property type="evidence" value="ECO:0007669"/>
    <property type="project" value="Ensembl"/>
</dbReference>
<dbReference type="GO" id="GO:0001656">
    <property type="term" value="P:metanephros development"/>
    <property type="evidence" value="ECO:0000270"/>
    <property type="project" value="UniProtKB"/>
</dbReference>
<dbReference type="GO" id="GO:0010628">
    <property type="term" value="P:positive regulation of gene expression"/>
    <property type="evidence" value="ECO:0007669"/>
    <property type="project" value="Ensembl"/>
</dbReference>
<dbReference type="GO" id="GO:0072272">
    <property type="term" value="P:proximal/distal pattern formation involved in metanephric nephron development"/>
    <property type="evidence" value="ECO:0000270"/>
    <property type="project" value="UniProtKB"/>
</dbReference>
<dbReference type="GO" id="GO:0072086">
    <property type="term" value="P:specification of loop of Henle identity"/>
    <property type="evidence" value="ECO:0000270"/>
    <property type="project" value="UniProtKB"/>
</dbReference>
<dbReference type="CDD" id="cd00086">
    <property type="entry name" value="homeodomain"/>
    <property type="match status" value="1"/>
</dbReference>
<dbReference type="FunFam" id="1.10.10.60:FF:000003">
    <property type="entry name" value="Iroquois-class homeobox protein IRX"/>
    <property type="match status" value="1"/>
</dbReference>
<dbReference type="Gene3D" id="1.10.10.60">
    <property type="entry name" value="Homeodomain-like"/>
    <property type="match status" value="1"/>
</dbReference>
<dbReference type="InterPro" id="IPR001356">
    <property type="entry name" value="HD"/>
</dbReference>
<dbReference type="InterPro" id="IPR017970">
    <property type="entry name" value="Homeobox_CS"/>
</dbReference>
<dbReference type="InterPro" id="IPR009057">
    <property type="entry name" value="Homeodomain-like_sf"/>
</dbReference>
<dbReference type="InterPro" id="IPR003893">
    <property type="entry name" value="Iroquois_homeo"/>
</dbReference>
<dbReference type="InterPro" id="IPR008422">
    <property type="entry name" value="KN_HD"/>
</dbReference>
<dbReference type="PANTHER" id="PTHR11211">
    <property type="entry name" value="IROQUOIS-CLASS HOMEODOMAIN PROTEIN IRX"/>
    <property type="match status" value="1"/>
</dbReference>
<dbReference type="PANTHER" id="PTHR11211:SF13">
    <property type="entry name" value="IROQUOIS-CLASS HOMEODOMAIN PROTEIN IRX-1"/>
    <property type="match status" value="1"/>
</dbReference>
<dbReference type="Pfam" id="PF05920">
    <property type="entry name" value="Homeobox_KN"/>
    <property type="match status" value="1"/>
</dbReference>
<dbReference type="SMART" id="SM00389">
    <property type="entry name" value="HOX"/>
    <property type="match status" value="1"/>
</dbReference>
<dbReference type="SMART" id="SM00548">
    <property type="entry name" value="IRO"/>
    <property type="match status" value="1"/>
</dbReference>
<dbReference type="SUPFAM" id="SSF46689">
    <property type="entry name" value="Homeodomain-like"/>
    <property type="match status" value="1"/>
</dbReference>
<dbReference type="PROSITE" id="PS00027">
    <property type="entry name" value="HOMEOBOX_1"/>
    <property type="match status" value="1"/>
</dbReference>
<dbReference type="PROSITE" id="PS50071">
    <property type="entry name" value="HOMEOBOX_2"/>
    <property type="match status" value="1"/>
</dbReference>
<keyword id="KW-0238">DNA-binding</keyword>
<keyword id="KW-0371">Homeobox</keyword>
<keyword id="KW-0539">Nucleus</keyword>
<keyword id="KW-0597">Phosphoprotein</keyword>
<keyword id="KW-1185">Reference proteome</keyword>
<accession>P81068</accession>
<accession>G5E8H6</accession>
<accession>O55120</accession>
<accession>Q3UZB9</accession>
<accession>Q9JLL6</accession>